<keyword id="KW-0963">Cytoplasm</keyword>
<keyword id="KW-1017">Isopeptide bond</keyword>
<keyword id="KW-0479">Metal-binding</keyword>
<keyword id="KW-0539">Nucleus</keyword>
<keyword id="KW-0597">Phosphoprotein</keyword>
<keyword id="KW-1185">Reference proteome</keyword>
<keyword id="KW-0808">Transferase</keyword>
<keyword id="KW-0832">Ubl conjugation</keyword>
<keyword id="KW-0833">Ubl conjugation pathway</keyword>
<keyword id="KW-0879">Wnt signaling pathway</keyword>
<keyword id="KW-0862">Zinc</keyword>
<keyword id="KW-0863">Zinc-finger</keyword>
<proteinExistence type="inferred from homology"/>
<evidence type="ECO:0000250" key="1"/>
<evidence type="ECO:0000250" key="2">
    <source>
        <dbReference type="UniProtKB" id="Q5XIK5"/>
    </source>
</evidence>
<evidence type="ECO:0000250" key="3">
    <source>
        <dbReference type="UniProtKB" id="Q9CZW6"/>
    </source>
</evidence>
<evidence type="ECO:0000250" key="4">
    <source>
        <dbReference type="UniProtKB" id="Q9NTX7"/>
    </source>
</evidence>
<evidence type="ECO:0000255" key="5">
    <source>
        <dbReference type="PROSITE-ProRule" id="PRU00175"/>
    </source>
</evidence>
<evidence type="ECO:0000255" key="6">
    <source>
        <dbReference type="PROSITE-ProRule" id="PRU00248"/>
    </source>
</evidence>
<evidence type="ECO:0000256" key="7">
    <source>
        <dbReference type="SAM" id="MobiDB-lite"/>
    </source>
</evidence>
<evidence type="ECO:0000305" key="8"/>
<comment type="function">
    <text evidence="3 4">E3 ubiquitin-protein ligase that specifically binds poly-ADP-ribosylated (PARsylated) proteins and mediates their ubiquitination and subsequent degradation. May regulate many important biological processes, such as cell survival and DNA damage response. Acts as an activator of the Wnt signaling pathway by mediating the ubiquitination of PARsylated AXIN1 and AXIN2, 2 key components of the beta-catenin destruction complex. Acts in cooperation with tankyrase proteins (TNKS and TNKS2), which mediate PARsylation of target proteins AXIN1, AXIN2, BLZF1, CASC3, TNKS and TNKS2. Recognizes and binds tankyrase-dependent PARsylated proteins via its WWE domain and mediates their ubiquitination, leading to their degradation. Different ubiquitin linkage types have been observed: TNKS2 undergoes ubiquitination at 'Lys-48' and 'Lys-63', while AXIN1 is only ubiquitinated at 'Lys-48'. May regulate TNKS and TNKS2 subcellular location, preventing aggregation at a centrosomal location. Neuroprotective protein (By similarity). Protects the brain against N-methyl-D-aspartate (NMDA) receptor-mediated glutamate excitotoxicity and ischemia, by interfering with PAR-induced cell death, called parthanatos (By similarity). Prevents nuclear translocation of AIFM1 in a PAR-binding dependent manner (By similarity). Does not affect PARP1 activation. Protects against cell death induced by DNA damaging agents, such as N-methyl-N-nitro-N-nitrosoguanidine (MNNG) and rescues cells from G1 arrest (By similarity). Promotes cell survival after gamma-irradiation. Facilitates DNA repair (By similarity).</text>
</comment>
<comment type="catalytic activity">
    <reaction>
        <text>S-ubiquitinyl-[E2 ubiquitin-conjugating enzyme]-L-cysteine + [acceptor protein]-L-lysine = [E2 ubiquitin-conjugating enzyme]-L-cysteine + N(6)-ubiquitinyl-[acceptor protein]-L-lysine.</text>
        <dbReference type="EC" id="2.3.2.27"/>
    </reaction>
</comment>
<comment type="pathway">
    <text>Protein modification; protein ubiquitination.</text>
</comment>
<comment type="subunit">
    <text evidence="1">Can form homooligomers. Interacts with PARsylated AXIN1, AXIN2, BLZF1, CASC3, H1-2, IPO7, LIG3, NCL, PARP1, XRCC1, XRCC5 and XRCC6. Interacts with DDB1, DHX15, IQGAP1, LRPPRC, PARP2, PRKDC, RUVBL2, TNKS1 and TNKS2. Binding often leads to interactor ubiquitination, in the presence of the appropriate E1 and E2 enzymes, and proteasomal degradation.</text>
</comment>
<comment type="subcellular location">
    <subcellularLocation>
        <location evidence="1">Cytoplasm</location>
        <location evidence="1">Cytosol</location>
    </subcellularLocation>
    <subcellularLocation>
        <location evidence="1">Nucleus</location>
    </subcellularLocation>
    <text evidence="1">Translocates to the nucleus after DNA damage, such as laser-induced DNA breaks, and concentrates at DNA breaks. This translocation requires PARP1 activation and PAR-binding.</text>
</comment>
<comment type="domain">
    <text evidence="1">The WWE domain mediates non-covalent poly(ADP-ribose)-binding.</text>
</comment>
<comment type="PTM">
    <text evidence="1">Ubiquitinated; autoubiquitinated. Autoubiquitination is enhanced upon poly(ADP-ribose)-binding.</text>
</comment>
<accession>D2H0Y8</accession>
<feature type="chain" id="PRO_0000409501" description="E3 ubiquitin-protein ligase RNF146">
    <location>
        <begin position="1"/>
        <end position="359"/>
    </location>
</feature>
<feature type="domain" description="WWE" evidence="6">
    <location>
        <begin position="91"/>
        <end position="167"/>
    </location>
</feature>
<feature type="zinc finger region" description="RING-type" evidence="5">
    <location>
        <begin position="36"/>
        <end position="74"/>
    </location>
</feature>
<feature type="region of interest" description="Disordered" evidence="7">
    <location>
        <begin position="259"/>
        <end position="359"/>
    </location>
</feature>
<feature type="compositionally biased region" description="Acidic residues" evidence="7">
    <location>
        <begin position="284"/>
        <end position="298"/>
    </location>
</feature>
<feature type="compositionally biased region" description="Polar residues" evidence="7">
    <location>
        <begin position="306"/>
        <end position="322"/>
    </location>
</feature>
<feature type="binding site" evidence="1">
    <location>
        <position position="107"/>
    </location>
    <ligand>
        <name>a glycoprotein</name>
        <dbReference type="ChEBI" id="CHEBI:17089"/>
    </ligand>
    <ligandPart>
        <name>poly[(1''-&gt;2')-ADP-alpha-D-ribose] group</name>
        <dbReference type="ChEBI" id="CHEBI:157741"/>
    </ligandPart>
</feature>
<feature type="binding site" evidence="1">
    <location>
        <position position="110"/>
    </location>
    <ligand>
        <name>a glycoprotein</name>
        <dbReference type="ChEBI" id="CHEBI:17089"/>
    </ligand>
    <ligandPart>
        <name>poly[(1''-&gt;2')-ADP-alpha-D-ribose] group</name>
        <dbReference type="ChEBI" id="CHEBI:157741"/>
    </ligandPart>
</feature>
<feature type="binding site" evidence="1">
    <location>
        <position position="114"/>
    </location>
    <ligand>
        <name>a glycoprotein</name>
        <dbReference type="ChEBI" id="CHEBI:17089"/>
    </ligand>
    <ligandPart>
        <name>poly[(1''-&gt;2')-ADP-alpha-D-ribose] group</name>
        <dbReference type="ChEBI" id="CHEBI:157741"/>
    </ligandPart>
</feature>
<feature type="binding site" evidence="1">
    <location>
        <position position="144"/>
    </location>
    <ligand>
        <name>a glycoprotein</name>
        <dbReference type="ChEBI" id="CHEBI:17089"/>
    </ligand>
    <ligandPart>
        <name>poly[(1''-&gt;2')-ADP-alpha-D-ribose] group</name>
        <dbReference type="ChEBI" id="CHEBI:157741"/>
    </ligandPart>
</feature>
<feature type="binding site" evidence="1">
    <location>
        <position position="153"/>
    </location>
    <ligand>
        <name>a glycoprotein</name>
        <dbReference type="ChEBI" id="CHEBI:17089"/>
    </ligand>
    <ligandPart>
        <name>poly[(1''-&gt;2')-ADP-alpha-D-ribose] group</name>
        <dbReference type="ChEBI" id="CHEBI:157741"/>
    </ligandPart>
</feature>
<feature type="binding site" evidence="1">
    <location>
        <position position="163"/>
    </location>
    <ligand>
        <name>a glycoprotein</name>
        <dbReference type="ChEBI" id="CHEBI:17089"/>
    </ligand>
    <ligandPart>
        <name>poly[(1''-&gt;2')-ADP-alpha-D-ribose] group</name>
        <dbReference type="ChEBI" id="CHEBI:157741"/>
    </ligandPart>
</feature>
<feature type="binding site" evidence="1">
    <location>
        <position position="175"/>
    </location>
    <ligand>
        <name>a glycoprotein</name>
        <dbReference type="ChEBI" id="CHEBI:17089"/>
    </ligand>
    <ligandPart>
        <name>poly[(1''-&gt;2')-ADP-alpha-D-ribose] group</name>
        <dbReference type="ChEBI" id="CHEBI:157741"/>
    </ligandPart>
</feature>
<feature type="modified residue" description="Phosphoserine" evidence="2">
    <location>
        <position position="290"/>
    </location>
</feature>
<feature type="modified residue" description="Phosphoserine" evidence="2">
    <location>
        <position position="294"/>
    </location>
</feature>
<feature type="cross-link" description="Glycyl lysine isopeptide (Lys-Gly) (interchain with G-Cter in ubiquitin)" evidence="4">
    <location>
        <position position="84"/>
    </location>
</feature>
<feature type="cross-link" description="Glycyl lysine isopeptide (Lys-Gly) (interchain with G-Cter in ubiquitin)" evidence="4">
    <location>
        <position position="94"/>
    </location>
</feature>
<feature type="cross-link" description="Glycyl lysine isopeptide (Lys-Gly) (interchain with G-Cter in ubiquitin)" evidence="4">
    <location>
        <position position="130"/>
    </location>
</feature>
<feature type="cross-link" description="Glycyl lysine isopeptide (Lys-Gly) (interchain with G-Cter in ubiquitin)" evidence="4">
    <location>
        <position position="175"/>
    </location>
</feature>
<sequence length="359" mass="38839">MAGCGEIDHSVNMLPTNRKANESCANPAPSLTVPECAICLQTCVHPVSLPCKHVFCYLCVKGASWLGKRCALCRQEIPEDFLDKPTLLSPEELKAASRGNGEYAWYYEGRNGWWQYDERTSRELEDAFSKGKKSTEMLIAGFLYVADLENMVQYRRNEHGRRRKIKRDIIDIPKKGVAGLRLDCEANTVNLARESSADGADSVSAQSGASSVQPLVSSLRPLTSVDGQLTSPATPSPDASTSLEDSFAHLQLSGDSIAERSHRGEGEEDHESPSSGRVPAPDTSVEETESDASSDSEDVSALVAQHSLTQQRLLVPNANQTVSDRSDRSGIDRSVAGGGTVNAGVRSRRPDGQCTVTEV</sequence>
<name>RN146_AILME</name>
<gene>
    <name type="primary">RNF146</name>
    <name type="ORF">PANDA_003130</name>
</gene>
<dbReference type="EC" id="2.3.2.27"/>
<dbReference type="EMBL" id="GL192419">
    <property type="protein sequence ID" value="EFB13674.1"/>
    <property type="molecule type" value="Genomic_DNA"/>
</dbReference>
<dbReference type="BMRB" id="D2H0Y8"/>
<dbReference type="SMR" id="D2H0Y8"/>
<dbReference type="STRING" id="9646.ENSAMEP00000021212"/>
<dbReference type="eggNOG" id="KOG0824">
    <property type="taxonomic scope" value="Eukaryota"/>
</dbReference>
<dbReference type="HOGENOM" id="CLU_067425_0_0_1"/>
<dbReference type="InParanoid" id="D2H0Y8"/>
<dbReference type="OMA" id="KMAGCGE"/>
<dbReference type="UniPathway" id="UPA00143"/>
<dbReference type="Proteomes" id="UP000008912">
    <property type="component" value="Unassembled WGS sequence"/>
</dbReference>
<dbReference type="GO" id="GO:0005829">
    <property type="term" value="C:cytosol"/>
    <property type="evidence" value="ECO:0000250"/>
    <property type="project" value="UniProtKB"/>
</dbReference>
<dbReference type="GO" id="GO:0005634">
    <property type="term" value="C:nucleus"/>
    <property type="evidence" value="ECO:0007669"/>
    <property type="project" value="UniProtKB-SubCell"/>
</dbReference>
<dbReference type="GO" id="GO:0072572">
    <property type="term" value="F:poly-ADP-D-ribose binding"/>
    <property type="evidence" value="ECO:0000250"/>
    <property type="project" value="UniProtKB"/>
</dbReference>
<dbReference type="GO" id="GO:0061630">
    <property type="term" value="F:ubiquitin protein ligase activity"/>
    <property type="evidence" value="ECO:0007669"/>
    <property type="project" value="InterPro"/>
</dbReference>
<dbReference type="GO" id="GO:0004842">
    <property type="term" value="F:ubiquitin-protein transferase activity"/>
    <property type="evidence" value="ECO:0000250"/>
    <property type="project" value="UniProtKB"/>
</dbReference>
<dbReference type="GO" id="GO:0008270">
    <property type="term" value="F:zinc ion binding"/>
    <property type="evidence" value="ECO:0007669"/>
    <property type="project" value="UniProtKB-KW"/>
</dbReference>
<dbReference type="GO" id="GO:0090263">
    <property type="term" value="P:positive regulation of canonical Wnt signaling pathway"/>
    <property type="evidence" value="ECO:0000250"/>
    <property type="project" value="UniProtKB"/>
</dbReference>
<dbReference type="GO" id="GO:0051865">
    <property type="term" value="P:protein autoubiquitination"/>
    <property type="evidence" value="ECO:0000250"/>
    <property type="project" value="UniProtKB"/>
</dbReference>
<dbReference type="GO" id="GO:0070936">
    <property type="term" value="P:protein K48-linked ubiquitination"/>
    <property type="evidence" value="ECO:0000250"/>
    <property type="project" value="UniProtKB"/>
</dbReference>
<dbReference type="GO" id="GO:0006511">
    <property type="term" value="P:ubiquitin-dependent protein catabolic process"/>
    <property type="evidence" value="ECO:0000250"/>
    <property type="project" value="UniProtKB"/>
</dbReference>
<dbReference type="GO" id="GO:0016055">
    <property type="term" value="P:Wnt signaling pathway"/>
    <property type="evidence" value="ECO:0007669"/>
    <property type="project" value="UniProtKB-KW"/>
</dbReference>
<dbReference type="CDD" id="cd16546">
    <property type="entry name" value="RING-HC_RNF146"/>
    <property type="match status" value="1"/>
</dbReference>
<dbReference type="FunFam" id="3.30.40.10:FF:000204">
    <property type="entry name" value="E3 ubiquitin-protein ligase RNF146"/>
    <property type="match status" value="1"/>
</dbReference>
<dbReference type="FunFam" id="3.30.720.50:FF:000003">
    <property type="entry name" value="E3 ubiquitin-protein ligase RNF146"/>
    <property type="match status" value="1"/>
</dbReference>
<dbReference type="Gene3D" id="3.30.720.50">
    <property type="match status" value="1"/>
</dbReference>
<dbReference type="Gene3D" id="3.30.40.10">
    <property type="entry name" value="Zinc/RING finger domain, C3HC4 (zinc finger)"/>
    <property type="match status" value="1"/>
</dbReference>
<dbReference type="InterPro" id="IPR044110">
    <property type="entry name" value="RING-HC_RNF146"/>
</dbReference>
<dbReference type="InterPro" id="IPR033509">
    <property type="entry name" value="RNF146"/>
</dbReference>
<dbReference type="InterPro" id="IPR018123">
    <property type="entry name" value="WWE-dom_subgr"/>
</dbReference>
<dbReference type="InterPro" id="IPR004170">
    <property type="entry name" value="WWE_dom"/>
</dbReference>
<dbReference type="InterPro" id="IPR037197">
    <property type="entry name" value="WWE_dom_sf"/>
</dbReference>
<dbReference type="InterPro" id="IPR001841">
    <property type="entry name" value="Znf_RING"/>
</dbReference>
<dbReference type="InterPro" id="IPR013083">
    <property type="entry name" value="Znf_RING/FYVE/PHD"/>
</dbReference>
<dbReference type="InterPro" id="IPR017907">
    <property type="entry name" value="Znf_RING_CS"/>
</dbReference>
<dbReference type="PANTHER" id="PTHR13417">
    <property type="entry name" value="E3 UBIQUITIN-PROTEIN LIGASE RNF146"/>
    <property type="match status" value="1"/>
</dbReference>
<dbReference type="PANTHER" id="PTHR13417:SF2">
    <property type="entry name" value="E3 UBIQUITIN-PROTEIN LIGASE RNF146"/>
    <property type="match status" value="1"/>
</dbReference>
<dbReference type="Pfam" id="PF02825">
    <property type="entry name" value="WWE"/>
    <property type="match status" value="1"/>
</dbReference>
<dbReference type="Pfam" id="PF13920">
    <property type="entry name" value="zf-C3HC4_3"/>
    <property type="match status" value="1"/>
</dbReference>
<dbReference type="SMART" id="SM00184">
    <property type="entry name" value="RING"/>
    <property type="match status" value="1"/>
</dbReference>
<dbReference type="SMART" id="SM00678">
    <property type="entry name" value="WWE"/>
    <property type="match status" value="1"/>
</dbReference>
<dbReference type="SUPFAM" id="SSF57850">
    <property type="entry name" value="RING/U-box"/>
    <property type="match status" value="1"/>
</dbReference>
<dbReference type="SUPFAM" id="SSF117839">
    <property type="entry name" value="WWE domain"/>
    <property type="match status" value="1"/>
</dbReference>
<dbReference type="PROSITE" id="PS50918">
    <property type="entry name" value="WWE"/>
    <property type="match status" value="1"/>
</dbReference>
<dbReference type="PROSITE" id="PS00518">
    <property type="entry name" value="ZF_RING_1"/>
    <property type="match status" value="1"/>
</dbReference>
<dbReference type="PROSITE" id="PS50089">
    <property type="entry name" value="ZF_RING_2"/>
    <property type="match status" value="1"/>
</dbReference>
<organism>
    <name type="scientific">Ailuropoda melanoleuca</name>
    <name type="common">Giant panda</name>
    <dbReference type="NCBI Taxonomy" id="9646"/>
    <lineage>
        <taxon>Eukaryota</taxon>
        <taxon>Metazoa</taxon>
        <taxon>Chordata</taxon>
        <taxon>Craniata</taxon>
        <taxon>Vertebrata</taxon>
        <taxon>Euteleostomi</taxon>
        <taxon>Mammalia</taxon>
        <taxon>Eutheria</taxon>
        <taxon>Laurasiatheria</taxon>
        <taxon>Carnivora</taxon>
        <taxon>Caniformia</taxon>
        <taxon>Ursidae</taxon>
        <taxon>Ailuropoda</taxon>
    </lineage>
</organism>
<reference key="1">
    <citation type="journal article" date="2010" name="Nature">
        <title>The sequence and de novo assembly of the giant panda genome.</title>
        <authorList>
            <person name="Li R."/>
            <person name="Fan W."/>
            <person name="Tian G."/>
            <person name="Zhu H."/>
            <person name="He L."/>
            <person name="Cai J."/>
            <person name="Huang Q."/>
            <person name="Cai Q."/>
            <person name="Li B."/>
            <person name="Bai Y."/>
            <person name="Zhang Z."/>
            <person name="Zhang Y."/>
            <person name="Wang W."/>
            <person name="Li J."/>
            <person name="Wei F."/>
            <person name="Li H."/>
            <person name="Jian M."/>
            <person name="Li J."/>
            <person name="Zhang Z."/>
            <person name="Nielsen R."/>
            <person name="Li D."/>
            <person name="Gu W."/>
            <person name="Yang Z."/>
            <person name="Xuan Z."/>
            <person name="Ryder O.A."/>
            <person name="Leung F.C."/>
            <person name="Zhou Y."/>
            <person name="Cao J."/>
            <person name="Sun X."/>
            <person name="Fu Y."/>
            <person name="Fang X."/>
            <person name="Guo X."/>
            <person name="Wang B."/>
            <person name="Hou R."/>
            <person name="Shen F."/>
            <person name="Mu B."/>
            <person name="Ni P."/>
            <person name="Lin R."/>
            <person name="Qian W."/>
            <person name="Wang G."/>
            <person name="Yu C."/>
            <person name="Nie W."/>
            <person name="Wang J."/>
            <person name="Wu Z."/>
            <person name="Liang H."/>
            <person name="Min J."/>
            <person name="Wu Q."/>
            <person name="Cheng S."/>
            <person name="Ruan J."/>
            <person name="Wang M."/>
            <person name="Shi Z."/>
            <person name="Wen M."/>
            <person name="Liu B."/>
            <person name="Ren X."/>
            <person name="Zheng H."/>
            <person name="Dong D."/>
            <person name="Cook K."/>
            <person name="Shan G."/>
            <person name="Zhang H."/>
            <person name="Kosiol C."/>
            <person name="Xie X."/>
            <person name="Lu Z."/>
            <person name="Zheng H."/>
            <person name="Li Y."/>
            <person name="Steiner C.C."/>
            <person name="Lam T.T."/>
            <person name="Lin S."/>
            <person name="Zhang Q."/>
            <person name="Li G."/>
            <person name="Tian J."/>
            <person name="Gong T."/>
            <person name="Liu H."/>
            <person name="Zhang D."/>
            <person name="Fang L."/>
            <person name="Ye C."/>
            <person name="Zhang J."/>
            <person name="Hu W."/>
            <person name="Xu A."/>
            <person name="Ren Y."/>
            <person name="Zhang G."/>
            <person name="Bruford M.W."/>
            <person name="Li Q."/>
            <person name="Ma L."/>
            <person name="Guo Y."/>
            <person name="An N."/>
            <person name="Hu Y."/>
            <person name="Zheng Y."/>
            <person name="Shi Y."/>
            <person name="Li Z."/>
            <person name="Liu Q."/>
            <person name="Chen Y."/>
            <person name="Zhao J."/>
            <person name="Qu N."/>
            <person name="Zhao S."/>
            <person name="Tian F."/>
            <person name="Wang X."/>
            <person name="Wang H."/>
            <person name="Xu L."/>
            <person name="Liu X."/>
            <person name="Vinar T."/>
            <person name="Wang Y."/>
            <person name="Lam T.W."/>
            <person name="Yiu S.M."/>
            <person name="Liu S."/>
            <person name="Zhang H."/>
            <person name="Li D."/>
            <person name="Huang Y."/>
            <person name="Wang X."/>
            <person name="Yang G."/>
            <person name="Jiang Z."/>
            <person name="Wang J."/>
            <person name="Qin N."/>
            <person name="Li L."/>
            <person name="Li J."/>
            <person name="Bolund L."/>
            <person name="Kristiansen K."/>
            <person name="Wong G.K."/>
            <person name="Olson M."/>
            <person name="Zhang X."/>
            <person name="Li S."/>
            <person name="Yang H."/>
            <person name="Wang J."/>
            <person name="Wang J."/>
        </authorList>
    </citation>
    <scope>NUCLEOTIDE SEQUENCE [LARGE SCALE GENOMIC DNA]</scope>
</reference>
<protein>
    <recommendedName>
        <fullName>E3 ubiquitin-protein ligase RNF146</fullName>
        <ecNumber>2.3.2.27</ecNumber>
    </recommendedName>
    <alternativeName>
        <fullName>Iduna</fullName>
    </alternativeName>
    <alternativeName>
        <fullName>RING finger protein 146</fullName>
    </alternativeName>
    <alternativeName>
        <fullName evidence="8">RING-type E3 ubiquitin transferase RNF146</fullName>
    </alternativeName>
</protein>